<dbReference type="EC" id="2.1.2.3" evidence="1"/>
<dbReference type="EC" id="3.5.4.10" evidence="1"/>
<dbReference type="EMBL" id="CP000251">
    <property type="protein sequence ID" value="ABC82238.1"/>
    <property type="molecule type" value="Genomic_DNA"/>
</dbReference>
<dbReference type="RefSeq" id="WP_011421520.1">
    <property type="nucleotide sequence ID" value="NC_007760.1"/>
</dbReference>
<dbReference type="SMR" id="Q2IKQ7"/>
<dbReference type="STRING" id="290397.Adeh_2468"/>
<dbReference type="KEGG" id="ade:Adeh_2468"/>
<dbReference type="eggNOG" id="COG0138">
    <property type="taxonomic scope" value="Bacteria"/>
</dbReference>
<dbReference type="HOGENOM" id="CLU_016316_5_2_7"/>
<dbReference type="OrthoDB" id="9802065at2"/>
<dbReference type="UniPathway" id="UPA00074">
    <property type="reaction ID" value="UER00133"/>
</dbReference>
<dbReference type="UniPathway" id="UPA00074">
    <property type="reaction ID" value="UER00135"/>
</dbReference>
<dbReference type="Proteomes" id="UP000001935">
    <property type="component" value="Chromosome"/>
</dbReference>
<dbReference type="GO" id="GO:0005829">
    <property type="term" value="C:cytosol"/>
    <property type="evidence" value="ECO:0007669"/>
    <property type="project" value="TreeGrafter"/>
</dbReference>
<dbReference type="GO" id="GO:0003937">
    <property type="term" value="F:IMP cyclohydrolase activity"/>
    <property type="evidence" value="ECO:0007669"/>
    <property type="project" value="UniProtKB-UniRule"/>
</dbReference>
<dbReference type="GO" id="GO:0004643">
    <property type="term" value="F:phosphoribosylaminoimidazolecarboxamide formyltransferase activity"/>
    <property type="evidence" value="ECO:0007669"/>
    <property type="project" value="UniProtKB-UniRule"/>
</dbReference>
<dbReference type="GO" id="GO:0006189">
    <property type="term" value="P:'de novo' IMP biosynthetic process"/>
    <property type="evidence" value="ECO:0007669"/>
    <property type="project" value="UniProtKB-UniRule"/>
</dbReference>
<dbReference type="CDD" id="cd01421">
    <property type="entry name" value="IMPCH"/>
    <property type="match status" value="1"/>
</dbReference>
<dbReference type="FunFam" id="3.40.140.20:FF:000001">
    <property type="entry name" value="Bifunctional purine biosynthesis protein PurH"/>
    <property type="match status" value="1"/>
</dbReference>
<dbReference type="FunFam" id="3.40.50.1380:FF:000001">
    <property type="entry name" value="Bifunctional purine biosynthesis protein PurH"/>
    <property type="match status" value="1"/>
</dbReference>
<dbReference type="Gene3D" id="3.40.140.20">
    <property type="match status" value="2"/>
</dbReference>
<dbReference type="Gene3D" id="3.40.50.1380">
    <property type="entry name" value="Methylglyoxal synthase-like domain"/>
    <property type="match status" value="1"/>
</dbReference>
<dbReference type="HAMAP" id="MF_00139">
    <property type="entry name" value="PurH"/>
    <property type="match status" value="1"/>
</dbReference>
<dbReference type="InterPro" id="IPR024051">
    <property type="entry name" value="AICAR_Tfase_dup_dom_sf"/>
</dbReference>
<dbReference type="InterPro" id="IPR016193">
    <property type="entry name" value="Cytidine_deaminase-like"/>
</dbReference>
<dbReference type="InterPro" id="IPR011607">
    <property type="entry name" value="MGS-like_dom"/>
</dbReference>
<dbReference type="InterPro" id="IPR036914">
    <property type="entry name" value="MGS-like_dom_sf"/>
</dbReference>
<dbReference type="InterPro" id="IPR002695">
    <property type="entry name" value="PurH-like"/>
</dbReference>
<dbReference type="NCBIfam" id="NF002049">
    <property type="entry name" value="PRK00881.1"/>
    <property type="match status" value="1"/>
</dbReference>
<dbReference type="NCBIfam" id="TIGR00355">
    <property type="entry name" value="purH"/>
    <property type="match status" value="1"/>
</dbReference>
<dbReference type="PANTHER" id="PTHR11692:SF0">
    <property type="entry name" value="BIFUNCTIONAL PURINE BIOSYNTHESIS PROTEIN ATIC"/>
    <property type="match status" value="1"/>
</dbReference>
<dbReference type="PANTHER" id="PTHR11692">
    <property type="entry name" value="BIFUNCTIONAL PURINE BIOSYNTHESIS PROTEIN PURH"/>
    <property type="match status" value="1"/>
</dbReference>
<dbReference type="Pfam" id="PF01808">
    <property type="entry name" value="AICARFT_IMPCHas"/>
    <property type="match status" value="1"/>
</dbReference>
<dbReference type="Pfam" id="PF02142">
    <property type="entry name" value="MGS"/>
    <property type="match status" value="1"/>
</dbReference>
<dbReference type="PIRSF" id="PIRSF000414">
    <property type="entry name" value="AICARFT_IMPCHas"/>
    <property type="match status" value="1"/>
</dbReference>
<dbReference type="SMART" id="SM00798">
    <property type="entry name" value="AICARFT_IMPCHas"/>
    <property type="match status" value="1"/>
</dbReference>
<dbReference type="SMART" id="SM00851">
    <property type="entry name" value="MGS"/>
    <property type="match status" value="1"/>
</dbReference>
<dbReference type="SUPFAM" id="SSF53927">
    <property type="entry name" value="Cytidine deaminase-like"/>
    <property type="match status" value="1"/>
</dbReference>
<dbReference type="SUPFAM" id="SSF52335">
    <property type="entry name" value="Methylglyoxal synthase-like"/>
    <property type="match status" value="1"/>
</dbReference>
<dbReference type="PROSITE" id="PS51855">
    <property type="entry name" value="MGS"/>
    <property type="match status" value="1"/>
</dbReference>
<name>PUR9_ANADE</name>
<gene>
    <name evidence="1" type="primary">purH</name>
    <name type="ordered locus">Adeh_2468</name>
</gene>
<reference key="1">
    <citation type="submission" date="2006-01" db="EMBL/GenBank/DDBJ databases">
        <title>Complete sequence of Anaeromyxobacter dehalogenans 2CP-C.</title>
        <authorList>
            <person name="Copeland A."/>
            <person name="Lucas S."/>
            <person name="Lapidus A."/>
            <person name="Barry K."/>
            <person name="Detter J.C."/>
            <person name="Glavina T."/>
            <person name="Hammon N."/>
            <person name="Israni S."/>
            <person name="Pitluck S."/>
            <person name="Brettin T."/>
            <person name="Bruce D."/>
            <person name="Han C."/>
            <person name="Tapia R."/>
            <person name="Gilna P."/>
            <person name="Kiss H."/>
            <person name="Schmutz J."/>
            <person name="Larimer F."/>
            <person name="Land M."/>
            <person name="Kyrpides N."/>
            <person name="Anderson I."/>
            <person name="Sanford R.A."/>
            <person name="Ritalahti K.M."/>
            <person name="Thomas H.S."/>
            <person name="Kirby J.R."/>
            <person name="Zhulin I.B."/>
            <person name="Loeffler F.E."/>
            <person name="Richardson P."/>
        </authorList>
    </citation>
    <scope>NUCLEOTIDE SEQUENCE [LARGE SCALE GENOMIC DNA]</scope>
    <source>
        <strain>2CP-C</strain>
    </source>
</reference>
<organism>
    <name type="scientific">Anaeromyxobacter dehalogenans (strain 2CP-C)</name>
    <dbReference type="NCBI Taxonomy" id="290397"/>
    <lineage>
        <taxon>Bacteria</taxon>
        <taxon>Pseudomonadati</taxon>
        <taxon>Myxococcota</taxon>
        <taxon>Myxococcia</taxon>
        <taxon>Myxococcales</taxon>
        <taxon>Cystobacterineae</taxon>
        <taxon>Anaeromyxobacteraceae</taxon>
        <taxon>Anaeromyxobacter</taxon>
    </lineage>
</organism>
<accession>Q2IKQ7</accession>
<comment type="catalytic activity">
    <reaction evidence="1">
        <text>(6R)-10-formyltetrahydrofolate + 5-amino-1-(5-phospho-beta-D-ribosyl)imidazole-4-carboxamide = 5-formamido-1-(5-phospho-D-ribosyl)imidazole-4-carboxamide + (6S)-5,6,7,8-tetrahydrofolate</text>
        <dbReference type="Rhea" id="RHEA:22192"/>
        <dbReference type="ChEBI" id="CHEBI:57453"/>
        <dbReference type="ChEBI" id="CHEBI:58467"/>
        <dbReference type="ChEBI" id="CHEBI:58475"/>
        <dbReference type="ChEBI" id="CHEBI:195366"/>
        <dbReference type="EC" id="2.1.2.3"/>
    </reaction>
</comment>
<comment type="catalytic activity">
    <reaction evidence="1">
        <text>IMP + H2O = 5-formamido-1-(5-phospho-D-ribosyl)imidazole-4-carboxamide</text>
        <dbReference type="Rhea" id="RHEA:18445"/>
        <dbReference type="ChEBI" id="CHEBI:15377"/>
        <dbReference type="ChEBI" id="CHEBI:58053"/>
        <dbReference type="ChEBI" id="CHEBI:58467"/>
        <dbReference type="EC" id="3.5.4.10"/>
    </reaction>
</comment>
<comment type="pathway">
    <text evidence="1">Purine metabolism; IMP biosynthesis via de novo pathway; 5-formamido-1-(5-phospho-D-ribosyl)imidazole-4-carboxamide from 5-amino-1-(5-phospho-D-ribosyl)imidazole-4-carboxamide (10-formyl THF route): step 1/1.</text>
</comment>
<comment type="pathway">
    <text evidence="1">Purine metabolism; IMP biosynthesis via de novo pathway; IMP from 5-formamido-1-(5-phospho-D-ribosyl)imidazole-4-carboxamide: step 1/1.</text>
</comment>
<comment type="domain">
    <text evidence="1">The IMP cyclohydrolase activity resides in the N-terminal region.</text>
</comment>
<comment type="similarity">
    <text evidence="1">Belongs to the PurH family.</text>
</comment>
<feature type="chain" id="PRO_1000018834" description="Bifunctional purine biosynthesis protein PurH">
    <location>
        <begin position="1"/>
        <end position="524"/>
    </location>
</feature>
<feature type="domain" description="MGS-like" evidence="2">
    <location>
        <begin position="1"/>
        <end position="144"/>
    </location>
</feature>
<protein>
    <recommendedName>
        <fullName evidence="1">Bifunctional purine biosynthesis protein PurH</fullName>
    </recommendedName>
    <domain>
        <recommendedName>
            <fullName evidence="1">Phosphoribosylaminoimidazolecarboxamide formyltransferase</fullName>
            <ecNumber evidence="1">2.1.2.3</ecNumber>
        </recommendedName>
        <alternativeName>
            <fullName evidence="1">AICAR transformylase</fullName>
        </alternativeName>
    </domain>
    <domain>
        <recommendedName>
            <fullName evidence="1">IMP cyclohydrolase</fullName>
            <ecNumber evidence="1">3.5.4.10</ecNumber>
        </recommendedName>
        <alternativeName>
            <fullName evidence="1">ATIC</fullName>
        </alternativeName>
        <alternativeName>
            <fullName evidence="1">IMP synthase</fullName>
        </alternativeName>
        <alternativeName>
            <fullName evidence="1">Inosinicase</fullName>
        </alternativeName>
    </domain>
</protein>
<keyword id="KW-0378">Hydrolase</keyword>
<keyword id="KW-0511">Multifunctional enzyme</keyword>
<keyword id="KW-0658">Purine biosynthesis</keyword>
<keyword id="KW-1185">Reference proteome</keyword>
<keyword id="KW-0808">Transferase</keyword>
<sequence>MTRRALVSVSDKTGLVPFARRLAALGVELLSTGGTQKALAEAGVPVTGVGDYTQAPEILGGRVKTLHPRVHGGILYRRGLASDEADVKARDIPPIDLVVVNLYPFREAVAAGKPFETCVEEIDIGGPTMVRSAAKNSAHVGVVVDPADYDKVAAELEATRALSDATRFYLMKKAFAHTAAYDAAISEYLTARETPEAAPAHFPATLAAVYTKAYDLRYGENPHQAGAFYRAAREPEEPSVAFAQVLQGKELSYNNLLDLQAALAGVMEFDETACVVIKHNTPCGVSTGRTAGEAFARARECDPVSAFGGIVALNRPVDEATASELTSLFLECVIAPGYDAAARAALAVKKNLRLLEAPRLGAARATWRRRPEEGRELRSIPGGLLVMDRDLGSVRREDCKVMTKRAPTEQEWKDLLFAWKVVKHVKSNAIVFAKDDRTVAIGGGQTSRVESVKTAVMKAALDVRGSSVGSDAFFPFADGVEEIIKAGATAIIQPGGSMRDAEVIAAADKAGIAMVATGMRHFRH</sequence>
<proteinExistence type="inferred from homology"/>
<evidence type="ECO:0000255" key="1">
    <source>
        <dbReference type="HAMAP-Rule" id="MF_00139"/>
    </source>
</evidence>
<evidence type="ECO:0000255" key="2">
    <source>
        <dbReference type="PROSITE-ProRule" id="PRU01202"/>
    </source>
</evidence>